<comment type="function">
    <text evidence="1">Catalyzes the reduction of 1-pyrroline-5-carboxylate (PCA) to L-proline.</text>
</comment>
<comment type="catalytic activity">
    <reaction>
        <text>L-proline + NADP(+) = (S)-1-pyrroline-5-carboxylate + NADPH + 2 H(+)</text>
        <dbReference type="Rhea" id="RHEA:14109"/>
        <dbReference type="ChEBI" id="CHEBI:15378"/>
        <dbReference type="ChEBI" id="CHEBI:17388"/>
        <dbReference type="ChEBI" id="CHEBI:57783"/>
        <dbReference type="ChEBI" id="CHEBI:58349"/>
        <dbReference type="ChEBI" id="CHEBI:60039"/>
        <dbReference type="EC" id="1.5.1.2"/>
    </reaction>
</comment>
<comment type="catalytic activity">
    <reaction>
        <text>L-proline + NAD(+) = (S)-1-pyrroline-5-carboxylate + NADH + 2 H(+)</text>
        <dbReference type="Rhea" id="RHEA:14105"/>
        <dbReference type="ChEBI" id="CHEBI:15378"/>
        <dbReference type="ChEBI" id="CHEBI:17388"/>
        <dbReference type="ChEBI" id="CHEBI:57540"/>
        <dbReference type="ChEBI" id="CHEBI:57945"/>
        <dbReference type="ChEBI" id="CHEBI:60039"/>
        <dbReference type="EC" id="1.5.1.2"/>
    </reaction>
</comment>
<comment type="pathway">
    <text>Amino-acid biosynthesis; L-proline biosynthesis; L-proline from L-glutamate 5-semialdehyde: step 1/1.</text>
</comment>
<comment type="subcellular location">
    <subcellularLocation>
        <location evidence="1">Cytoplasm</location>
    </subcellularLocation>
</comment>
<comment type="similarity">
    <text evidence="2">Belongs to the pyrroline-5-carboxylate reductase family.</text>
</comment>
<accession>P22350</accession>
<name>P5CR_METSM</name>
<dbReference type="EC" id="1.5.1.2"/>
<dbReference type="EMBL" id="X02587">
    <property type="protein sequence ID" value="CAA26425.1"/>
    <property type="molecule type" value="Genomic_DNA"/>
</dbReference>
<dbReference type="PIR" id="S28654">
    <property type="entry name" value="S28654"/>
</dbReference>
<dbReference type="SMR" id="P22350"/>
<dbReference type="UniPathway" id="UPA00098">
    <property type="reaction ID" value="UER00361"/>
</dbReference>
<dbReference type="GO" id="GO:0005737">
    <property type="term" value="C:cytoplasm"/>
    <property type="evidence" value="ECO:0007669"/>
    <property type="project" value="UniProtKB-SubCell"/>
</dbReference>
<dbReference type="GO" id="GO:0004735">
    <property type="term" value="F:pyrroline-5-carboxylate reductase activity"/>
    <property type="evidence" value="ECO:0007669"/>
    <property type="project" value="UniProtKB-EC"/>
</dbReference>
<dbReference type="GO" id="GO:0055129">
    <property type="term" value="P:L-proline biosynthetic process"/>
    <property type="evidence" value="ECO:0007669"/>
    <property type="project" value="UniProtKB-UniPathway"/>
</dbReference>
<dbReference type="Gene3D" id="3.40.50.720">
    <property type="entry name" value="NAD(P)-binding Rossmann-like Domain"/>
    <property type="match status" value="1"/>
</dbReference>
<dbReference type="Gene3D" id="1.10.3730.10">
    <property type="entry name" value="ProC C-terminal domain-like"/>
    <property type="match status" value="1"/>
</dbReference>
<dbReference type="InterPro" id="IPR008927">
    <property type="entry name" value="6-PGluconate_DH-like_C_sf"/>
</dbReference>
<dbReference type="InterPro" id="IPR036291">
    <property type="entry name" value="NAD(P)-bd_dom_sf"/>
</dbReference>
<dbReference type="InterPro" id="IPR028939">
    <property type="entry name" value="P5C_Rdtase_cat_N"/>
</dbReference>
<dbReference type="InterPro" id="IPR053790">
    <property type="entry name" value="P5CR-like_CS"/>
</dbReference>
<dbReference type="InterPro" id="IPR029036">
    <property type="entry name" value="P5CR_dimer"/>
</dbReference>
<dbReference type="InterPro" id="IPR000304">
    <property type="entry name" value="Pyrroline-COOH_reductase"/>
</dbReference>
<dbReference type="PANTHER" id="PTHR11645">
    <property type="entry name" value="PYRROLINE-5-CARBOXYLATE REDUCTASE"/>
    <property type="match status" value="1"/>
</dbReference>
<dbReference type="PANTHER" id="PTHR11645:SF53">
    <property type="entry name" value="PYRROLINE-5-CARBOXYLATE REDUCTASE 3"/>
    <property type="match status" value="1"/>
</dbReference>
<dbReference type="Pfam" id="PF03807">
    <property type="entry name" value="F420_oxidored"/>
    <property type="match status" value="1"/>
</dbReference>
<dbReference type="Pfam" id="PF14748">
    <property type="entry name" value="P5CR_dimer"/>
    <property type="match status" value="1"/>
</dbReference>
<dbReference type="PIRSF" id="PIRSF000193">
    <property type="entry name" value="Pyrrol-5-carb_rd"/>
    <property type="match status" value="1"/>
</dbReference>
<dbReference type="SUPFAM" id="SSF48179">
    <property type="entry name" value="6-phosphogluconate dehydrogenase C-terminal domain-like"/>
    <property type="match status" value="1"/>
</dbReference>
<dbReference type="SUPFAM" id="SSF51735">
    <property type="entry name" value="NAD(P)-binding Rossmann-fold domains"/>
    <property type="match status" value="1"/>
</dbReference>
<dbReference type="PROSITE" id="PS00521">
    <property type="entry name" value="P5CR"/>
    <property type="match status" value="1"/>
</dbReference>
<feature type="chain" id="PRO_0000187313" description="Pyrroline-5-carboxylate reductase">
    <location>
        <begin position="1"/>
        <end position="251"/>
    </location>
</feature>
<proteinExistence type="inferred from homology"/>
<protein>
    <recommendedName>
        <fullName>Pyrroline-5-carboxylate reductase</fullName>
        <shortName>P5C reductase</shortName>
        <shortName>P5CR</shortName>
        <ecNumber>1.5.1.2</ecNumber>
    </recommendedName>
    <alternativeName>
        <fullName>PCA reductase</fullName>
    </alternativeName>
</protein>
<reference key="1">
    <citation type="journal article" date="1985" name="Mol. Gen. Genet.">
        <title>Structure of genes and an insertion element in the methane producing archaebacterium Methanobrevibacter smithii.</title>
        <authorList>
            <person name="Hamilton P.T."/>
            <person name="Reeve J.N."/>
        </authorList>
    </citation>
    <scope>NUCLEOTIDE SEQUENCE [GENOMIC DNA]</scope>
</reference>
<sequence>MNLGIIGYGNIGELLSQNIISHDFCNLNKLYIANRTLSKINHLKDIDPRISITDDNIEVAKTCEKIIISVKTPDLAIVLDPLKPHITKNQQIIHTCAGTDLEFKDCGLSCVIPTISSTYDEDNPKKGVSIIMHDENVSGENREFVEKLFSKFSQIKVVDSPMDLEIATIAASCMPAFIALGVDLFAGELEEKCNLSKEETFKILAETLNSTAYILKEDIYSPDELINKVATKNGITQKGLDVLDKRPARYL</sequence>
<evidence type="ECO:0000250" key="1"/>
<evidence type="ECO:0000305" key="2"/>
<keyword id="KW-0028">Amino-acid biosynthesis</keyword>
<keyword id="KW-0963">Cytoplasm</keyword>
<keyword id="KW-0521">NADP</keyword>
<keyword id="KW-0560">Oxidoreductase</keyword>
<keyword id="KW-0641">Proline biosynthesis</keyword>
<gene>
    <name type="primary">proC</name>
</gene>
<organism>
    <name type="scientific">Methanobrevibacter smithii</name>
    <dbReference type="NCBI Taxonomy" id="2173"/>
    <lineage>
        <taxon>Archaea</taxon>
        <taxon>Methanobacteriati</taxon>
        <taxon>Methanobacteriota</taxon>
        <taxon>Methanomada group</taxon>
        <taxon>Methanobacteria</taxon>
        <taxon>Methanobacteriales</taxon>
        <taxon>Methanobacteriaceae</taxon>
        <taxon>Methanobrevibacter</taxon>
    </lineage>
</organism>